<dbReference type="EMBL" id="X59696">
    <property type="protein sequence ID" value="CAA42217.1"/>
    <property type="molecule type" value="mRNA"/>
</dbReference>
<dbReference type="EMBL" id="M22162">
    <property type="protein sequence ID" value="AAA41629.1"/>
    <property type="molecule type" value="mRNA"/>
</dbReference>
<dbReference type="EMBL" id="M35299">
    <property type="protein sequence ID" value="AAA74479.1"/>
    <property type="molecule type" value="mRNA"/>
</dbReference>
<dbReference type="EMBL" id="M35300">
    <property type="protein sequence ID" value="AAA41977.1"/>
    <property type="molecule type" value="mRNA"/>
</dbReference>
<dbReference type="EMBL" id="M27882">
    <property type="protein sequence ID" value="AAA41975.1"/>
    <property type="molecule type" value="mRNA"/>
</dbReference>
<dbReference type="EMBL" id="D11321">
    <property type="protein sequence ID" value="BAA01944.1"/>
    <property type="molecule type" value="Genomic_DNA"/>
</dbReference>
<dbReference type="PIR" id="S09602">
    <property type="entry name" value="TIRT1"/>
</dbReference>
<dbReference type="RefSeq" id="NP_036806.1">
    <property type="nucleotide sequence ID" value="NM_012674.2"/>
</dbReference>
<dbReference type="SMR" id="P09655"/>
<dbReference type="BioGRID" id="246952">
    <property type="interactions" value="1"/>
</dbReference>
<dbReference type="FunCoup" id="P09655">
    <property type="interactions" value="32"/>
</dbReference>
<dbReference type="STRING" id="10116.ENSRNOP00000018110"/>
<dbReference type="iPTMnet" id="P09655"/>
<dbReference type="PhosphoSitePlus" id="P09655"/>
<dbReference type="PaxDb" id="10116-ENSRNOP00000018110"/>
<dbReference type="Ensembl" id="ENSRNOT00000095851.1">
    <property type="protein sequence ID" value="ENSRNOP00000095930.1"/>
    <property type="gene ID" value="ENSRNOG00000068869.1"/>
</dbReference>
<dbReference type="GeneID" id="24833"/>
<dbReference type="KEGG" id="rno:24833"/>
<dbReference type="UCSC" id="RGD:3749">
    <property type="organism name" value="rat"/>
</dbReference>
<dbReference type="AGR" id="RGD:3749"/>
<dbReference type="CTD" id="6690"/>
<dbReference type="RGD" id="3749">
    <property type="gene designation" value="Spink1"/>
</dbReference>
<dbReference type="eggNOG" id="KOG3649">
    <property type="taxonomic scope" value="Eukaryota"/>
</dbReference>
<dbReference type="GeneTree" id="ENSGT00530000064228"/>
<dbReference type="HOGENOM" id="CLU_169765_2_1_1"/>
<dbReference type="InParanoid" id="P09655"/>
<dbReference type="OMA" id="ISRMGEC"/>
<dbReference type="OrthoDB" id="126772at2759"/>
<dbReference type="PhylomeDB" id="P09655"/>
<dbReference type="PRO" id="PR:P09655"/>
<dbReference type="Proteomes" id="UP000002494">
    <property type="component" value="Chromosome 18"/>
</dbReference>
<dbReference type="Bgee" id="ENSRNOG00000013464">
    <property type="expression patterns" value="Expressed in pancreas and 12 other cell types or tissues"/>
</dbReference>
<dbReference type="GO" id="GO:0005615">
    <property type="term" value="C:extracellular space"/>
    <property type="evidence" value="ECO:0000314"/>
    <property type="project" value="RGD"/>
</dbReference>
<dbReference type="GO" id="GO:0030414">
    <property type="term" value="F:peptidase inhibitor activity"/>
    <property type="evidence" value="ECO:0000266"/>
    <property type="project" value="RGD"/>
</dbReference>
<dbReference type="GO" id="GO:0004867">
    <property type="term" value="F:serine-type endopeptidase inhibitor activity"/>
    <property type="evidence" value="ECO:0000314"/>
    <property type="project" value="RGD"/>
</dbReference>
<dbReference type="GO" id="GO:0071375">
    <property type="term" value="P:cellular response to peptide hormone stimulus"/>
    <property type="evidence" value="ECO:0000270"/>
    <property type="project" value="RGD"/>
</dbReference>
<dbReference type="GO" id="GO:0090281">
    <property type="term" value="P:negative regulation of calcium ion import"/>
    <property type="evidence" value="ECO:0000266"/>
    <property type="project" value="RGD"/>
</dbReference>
<dbReference type="GO" id="GO:0010751">
    <property type="term" value="P:negative regulation of nitric oxide mediated signal transduction"/>
    <property type="evidence" value="ECO:0000266"/>
    <property type="project" value="RGD"/>
</dbReference>
<dbReference type="GO" id="GO:0007263">
    <property type="term" value="P:nitric oxide mediated signal transduction"/>
    <property type="evidence" value="ECO:0000266"/>
    <property type="project" value="RGD"/>
</dbReference>
<dbReference type="GO" id="GO:0007204">
    <property type="term" value="P:positive regulation of cytosolic calcium ion concentration"/>
    <property type="evidence" value="ECO:0000314"/>
    <property type="project" value="RGD"/>
</dbReference>
<dbReference type="GO" id="GO:0050679">
    <property type="term" value="P:positive regulation of epithelial cell proliferation"/>
    <property type="evidence" value="ECO:0000314"/>
    <property type="project" value="RGD"/>
</dbReference>
<dbReference type="GO" id="GO:0090187">
    <property type="term" value="P:positive regulation of pancreatic juice secretion"/>
    <property type="evidence" value="ECO:0000314"/>
    <property type="project" value="RGD"/>
</dbReference>
<dbReference type="GO" id="GO:0090277">
    <property type="term" value="P:positive regulation of peptide hormone secretion"/>
    <property type="evidence" value="ECO:0000314"/>
    <property type="project" value="RGD"/>
</dbReference>
<dbReference type="GO" id="GO:0060046">
    <property type="term" value="P:regulation of acrosome reaction"/>
    <property type="evidence" value="ECO:0000266"/>
    <property type="project" value="RGD"/>
</dbReference>
<dbReference type="GO" id="GO:2001256">
    <property type="term" value="P:regulation of store-operated calcium entry"/>
    <property type="evidence" value="ECO:0000266"/>
    <property type="project" value="RGD"/>
</dbReference>
<dbReference type="GO" id="GO:0045471">
    <property type="term" value="P:response to ethanol"/>
    <property type="evidence" value="ECO:0000270"/>
    <property type="project" value="RGD"/>
</dbReference>
<dbReference type="GO" id="GO:0031667">
    <property type="term" value="P:response to nutrient levels"/>
    <property type="evidence" value="ECO:0000270"/>
    <property type="project" value="RGD"/>
</dbReference>
<dbReference type="GO" id="GO:0048240">
    <property type="term" value="P:sperm capacitation"/>
    <property type="evidence" value="ECO:0000266"/>
    <property type="project" value="RGD"/>
</dbReference>
<dbReference type="CDD" id="cd01327">
    <property type="entry name" value="KAZAL_PSTI"/>
    <property type="match status" value="1"/>
</dbReference>
<dbReference type="FunFam" id="3.30.60.30:FF:000031">
    <property type="entry name" value="Serine protease inhibitor Kazal-type 2"/>
    <property type="match status" value="1"/>
</dbReference>
<dbReference type="Gene3D" id="3.30.60.30">
    <property type="match status" value="1"/>
</dbReference>
<dbReference type="InterPro" id="IPR002350">
    <property type="entry name" value="Kazal_dom"/>
</dbReference>
<dbReference type="InterPro" id="IPR036058">
    <property type="entry name" value="Kazal_dom_sf"/>
</dbReference>
<dbReference type="PANTHER" id="PTHR21312">
    <property type="entry name" value="SERINE PROTEASE INHIBITOR"/>
    <property type="match status" value="1"/>
</dbReference>
<dbReference type="PANTHER" id="PTHR21312:SF27">
    <property type="entry name" value="SERINE PROTEASE INHIBITOR KAZAL-TYPE 1"/>
    <property type="match status" value="1"/>
</dbReference>
<dbReference type="Pfam" id="PF00050">
    <property type="entry name" value="Kazal_1"/>
    <property type="match status" value="1"/>
</dbReference>
<dbReference type="SMART" id="SM00280">
    <property type="entry name" value="KAZAL"/>
    <property type="match status" value="1"/>
</dbReference>
<dbReference type="SUPFAM" id="SSF100895">
    <property type="entry name" value="Kazal-type serine protease inhibitors"/>
    <property type="match status" value="1"/>
</dbReference>
<dbReference type="PROSITE" id="PS00282">
    <property type="entry name" value="KAZAL_1"/>
    <property type="match status" value="1"/>
</dbReference>
<dbReference type="PROSITE" id="PS51465">
    <property type="entry name" value="KAZAL_2"/>
    <property type="match status" value="1"/>
</dbReference>
<comment type="function">
    <text evidence="1 3 4">Serine protease inhibitor which exhibits anti-trypsin activity (PubMed:3202973, PubMed:3597401). In the pancreas, protects against trypsin-catalyzed premature activation of zymogens (By similarity).</text>
</comment>
<comment type="function">
    <text evidence="1">In the male reproductive tract, binds to sperm heads where it modulates sperm capacitance by inhibiting calcium uptake and nitrogen oxide (NO) production (By similarity).</text>
</comment>
<comment type="subcellular location">
    <subcellularLocation>
        <location evidence="4">Secreted</location>
    </subcellularLocation>
</comment>
<keyword id="KW-0903">Direct protein sequencing</keyword>
<keyword id="KW-1015">Disulfide bond</keyword>
<keyword id="KW-0646">Protease inhibitor</keyword>
<keyword id="KW-1185">Reference proteome</keyword>
<keyword id="KW-0964">Secreted</keyword>
<keyword id="KW-0722">Serine protease inhibitor</keyword>
<keyword id="KW-0732">Signal</keyword>
<accession>P09655</accession>
<accession>P13072</accession>
<evidence type="ECO:0000250" key="1">
    <source>
        <dbReference type="UniProtKB" id="P09036"/>
    </source>
</evidence>
<evidence type="ECO:0000255" key="2">
    <source>
        <dbReference type="PROSITE-ProRule" id="PRU00798"/>
    </source>
</evidence>
<evidence type="ECO:0000269" key="3">
    <source>
    </source>
</evidence>
<evidence type="ECO:0000269" key="4">
    <source>
    </source>
</evidence>
<evidence type="ECO:0000303" key="5">
    <source>
    </source>
</evidence>
<evidence type="ECO:0000303" key="6">
    <source>
    </source>
</evidence>
<evidence type="ECO:0000305" key="7"/>
<evidence type="ECO:0000312" key="8">
    <source>
        <dbReference type="RGD" id="3749"/>
    </source>
</evidence>
<proteinExistence type="evidence at protein level"/>
<name>ISK1_RAT</name>
<reference key="1">
    <citation type="journal article" date="1989" name="Nucleic Acids Res.">
        <title>Complementary nucleotide sequence for monitor peptide, a novel cholecystokinin-releasing peptide in the rat.</title>
        <authorList>
            <person name="Fukuoka S."/>
            <person name="Scheele G.A."/>
        </authorList>
    </citation>
    <scope>NUCLEOTIDE SEQUENCE [MRNA]</scope>
    <source>
        <tissue>Pancreas</tissue>
    </source>
</reference>
<reference key="2">
    <citation type="journal article" date="1990" name="Pancreas">
        <title>Rapid and selective cloning of monitor peptide, a novel cholecystokinin-releasing peptide, using minimal amino acid sequence and the polymerase chain reaction.</title>
        <authorList>
            <person name="Fukuoka S."/>
            <person name="Scheele G.A."/>
        </authorList>
    </citation>
    <scope>NUCLEOTIDE SEQUENCE [MRNA]</scope>
    <source>
        <strain>Wistar</strain>
        <tissue>Pancreas</tissue>
    </source>
</reference>
<reference key="3">
    <citation type="journal article" date="1989" name="Biochem. Biophys. Res. Commun.">
        <title>On the cDNA's for two types of rat pancreatic secretory trypsin inhibitor.</title>
        <authorList>
            <person name="Horii A."/>
            <person name="Tomita N."/>
            <person name="Yokouchi H."/>
            <person name="Doi S."/>
            <person name="Uda K."/>
            <person name="Ogawa M."/>
            <person name="Mori T."/>
            <person name="Matsubara K."/>
        </authorList>
    </citation>
    <scope>NUCLEOTIDE SEQUENCE [MRNA]</scope>
    <source>
        <tissue>Pancreas</tissue>
    </source>
</reference>
<reference key="4">
    <citation type="journal article" date="1991" name="Eur. J. Biochem.">
        <title>Effect of a high-protein diet on the gene expression of a trypsin-sensitive, cholecystokinin-releasing peptide (monitor peptide) in the pancreas.</title>
        <authorList>
            <person name="Tsuzuki S."/>
            <person name="Fushiki T."/>
            <person name="Kondo A."/>
            <person name="Murayama H."/>
            <person name="Sugimoto E."/>
        </authorList>
    </citation>
    <scope>NUCLEOTIDE SEQUENCE [MRNA]</scope>
</reference>
<reference key="5">
    <citation type="journal article" date="1992" name="Biochim. Biophys. Acta">
        <title>Molecular cloning and characterization of genes encoding rat pancreatic cholecystokinin (CCK)-releasing peptide (monitor peptide) and pancreatic secretory trypsin inhibitor (PSTI).</title>
        <authorList>
            <person name="Tsuzuki S."/>
            <person name="Miura Y."/>
            <person name="Fushiki T."/>
            <person name="Oomori T."/>
            <person name="Satoh T."/>
            <person name="Natori Y."/>
            <person name="Sugimoto E."/>
        </authorList>
    </citation>
    <scope>NUCLEOTIDE SEQUENCE [GENOMIC DNA]</scope>
</reference>
<reference key="6">
    <citation type="journal article" date="1988" name="Biol. Chem. Hoppe-Seyler">
        <title>Purification, characterization and amino-acid sequencing of two pancreatic secretory trypsin inhibitors in rat pancreatic juice.</title>
        <authorList>
            <person name="Uda K."/>
            <person name="Ogawa M."/>
            <person name="Shibita T."/>
            <person name="Murata A."/>
            <person name="Mori T."/>
            <person name="Kikuchi N."/>
            <person name="Yoshida N."/>
            <person name="Tsunasawa S."/>
            <person name="Sakiyama F."/>
        </authorList>
    </citation>
    <scope>PROTEIN SEQUENCE OF 19-79</scope>
    <scope>FUNCTION</scope>
    <source>
        <strain>Wistar</strain>
        <tissue>Pancreas</tissue>
    </source>
</reference>
<reference key="7">
    <citation type="journal article" date="1987" name="J. Biol. Chem.">
        <title>Purification and sequencing of a trypsin-sensitive cholecystokinin-releasing peptide from rat pancreatic juice. Its homology with pancreatic secretory trypsin inhibitor.</title>
        <authorList>
            <person name="Iwai K."/>
            <person name="Fukuoka S."/>
            <person name="Fushiki T."/>
            <person name="Tsujikawa M."/>
            <person name="Hirose M."/>
            <person name="Tsunasawa S."/>
            <person name="Sakiyama F."/>
        </authorList>
    </citation>
    <scope>PROTEIN SEQUENCE OF 19-79</scope>
    <scope>FUNCTION</scope>
    <scope>SUBCELLULAR LOCATION</scope>
    <source>
        <tissue>Pancreas</tissue>
    </source>
</reference>
<gene>
    <name evidence="8" type="primary">Spink1</name>
</gene>
<protein>
    <recommendedName>
        <fullName evidence="8">Serine protease inhibitor Kazal-type 1</fullName>
    </recommendedName>
    <alternativeName>
        <fullName evidence="5">Cholecystokinin-releasing peptide</fullName>
    </alternativeName>
    <alternativeName>
        <fullName evidence="5">Monitor peptide</fullName>
    </alternativeName>
    <alternativeName>
        <fullName evidence="6">Pancreatic secretory trypsin inhibitor</fullName>
        <shortName evidence="6">PSTI-I</shortName>
    </alternativeName>
</protein>
<sequence>MKVAIIFLLSALALLSLAGNPPAEVNGKTPNCPKQIMGCPRIYDPVCGTNGITYPSECSLCFENRKFGTSIHIQRRGTC</sequence>
<organism>
    <name type="scientific">Rattus norvegicus</name>
    <name type="common">Rat</name>
    <dbReference type="NCBI Taxonomy" id="10116"/>
    <lineage>
        <taxon>Eukaryota</taxon>
        <taxon>Metazoa</taxon>
        <taxon>Chordata</taxon>
        <taxon>Craniata</taxon>
        <taxon>Vertebrata</taxon>
        <taxon>Euteleostomi</taxon>
        <taxon>Mammalia</taxon>
        <taxon>Eutheria</taxon>
        <taxon>Euarchontoglires</taxon>
        <taxon>Glires</taxon>
        <taxon>Rodentia</taxon>
        <taxon>Myomorpha</taxon>
        <taxon>Muroidea</taxon>
        <taxon>Muridae</taxon>
        <taxon>Murinae</taxon>
        <taxon>Rattus</taxon>
    </lineage>
</organism>
<feature type="signal peptide" evidence="3 4">
    <location>
        <begin position="1"/>
        <end position="18"/>
    </location>
</feature>
<feature type="chain" id="PRO_0000016558" description="Serine protease inhibitor Kazal-type 1">
    <location>
        <begin position="19"/>
        <end position="79"/>
    </location>
</feature>
<feature type="domain" description="Kazal-like" evidence="2">
    <location>
        <begin position="26"/>
        <end position="79"/>
    </location>
</feature>
<feature type="site" description="Reactive bond for trypsin" evidence="1">
    <location>
        <begin position="41"/>
        <end position="42"/>
    </location>
</feature>
<feature type="site" description="Necessary for sperm binding" evidence="1">
    <location>
        <begin position="43"/>
        <end position="44"/>
    </location>
</feature>
<feature type="disulfide bond" evidence="2">
    <location>
        <begin position="32"/>
        <end position="61"/>
    </location>
</feature>
<feature type="disulfide bond" evidence="2">
    <location>
        <begin position="39"/>
        <end position="58"/>
    </location>
</feature>
<feature type="disulfide bond" evidence="2">
    <location>
        <begin position="47"/>
        <end position="79"/>
    </location>
</feature>
<feature type="sequence conflict" description="In Ref. 7; AA sequence." evidence="7" ref="7">
    <original>T</original>
    <variation>G</variation>
    <location>
        <position position="78"/>
    </location>
</feature>